<sequence length="397" mass="43471">MLRWLCLYSALCALTHGSSARSLEWFTALVRTEYTEPLTNSSVTGSTESGRYGDSSPKESVKGFVGYPRDPWQLEGCHPDTQYIVPGTSAAAAAGPDSEWTQPWIALVARGGCTFKEKVFNAANRGASAVVIYNEAKSGNATVSMSHLGTGNTVVIMVSYPKGMEIMEPLRRDIPVKMVITVGTRHVQEFISGQSVVFVAIAFITMMIISLAWLIFYYIQRFLYTGAQCGNQSNRKETKKAISQLQLHRVKKGEKGIDIDAENCAVCIENYKTKDLVRILPCKHIFHRLCIDPWLIEHRTCPMCKLDVIKALGFWVEPEETLDIHVPDSIAGSSLSIGTVSITQEESRSEGNNLPSSSTGSSLQQSNSVKDDAGETTALLDDPGNDNAAATHTQDSH</sequence>
<reference key="1">
    <citation type="submission" date="2004-05" db="EMBL/GenBank/DDBJ databases">
        <authorList>
            <consortium name="NIH - Xenopus Gene Collection (XGC) project"/>
        </authorList>
    </citation>
    <scope>NUCLEOTIDE SEQUENCE [LARGE SCALE MRNA]</scope>
    <source>
        <tissue>Ovary</tissue>
    </source>
</reference>
<organism>
    <name type="scientific">Xenopus laevis</name>
    <name type="common">African clawed frog</name>
    <dbReference type="NCBI Taxonomy" id="8355"/>
    <lineage>
        <taxon>Eukaryota</taxon>
        <taxon>Metazoa</taxon>
        <taxon>Chordata</taxon>
        <taxon>Craniata</taxon>
        <taxon>Vertebrata</taxon>
        <taxon>Euteleostomi</taxon>
        <taxon>Amphibia</taxon>
        <taxon>Batrachia</taxon>
        <taxon>Anura</taxon>
        <taxon>Pipoidea</taxon>
        <taxon>Pipidae</taxon>
        <taxon>Xenopodinae</taxon>
        <taxon>Xenopus</taxon>
        <taxon>Xenopus</taxon>
    </lineage>
</organism>
<dbReference type="EC" id="2.3.2.27"/>
<dbReference type="EMBL" id="BC070590">
    <property type="protein sequence ID" value="AAH70590.1"/>
    <property type="molecule type" value="mRNA"/>
</dbReference>
<dbReference type="RefSeq" id="NP_001084782.1">
    <property type="nucleotide sequence ID" value="NM_001091313.1"/>
</dbReference>
<dbReference type="SMR" id="Q6NRX0"/>
<dbReference type="GlyCosmos" id="Q6NRX0">
    <property type="glycosylation" value="3 sites, No reported glycans"/>
</dbReference>
<dbReference type="DNASU" id="431819"/>
<dbReference type="GeneID" id="431819"/>
<dbReference type="KEGG" id="xla:431819"/>
<dbReference type="AGR" id="Xenbase:XB-GENE-972107"/>
<dbReference type="CTD" id="431819"/>
<dbReference type="Xenbase" id="XB-GENE-972107">
    <property type="gene designation" value="rnf149.L"/>
</dbReference>
<dbReference type="OMA" id="GPDSEWT"/>
<dbReference type="OrthoDB" id="9984778at2759"/>
<dbReference type="UniPathway" id="UPA00143"/>
<dbReference type="Proteomes" id="UP000186698">
    <property type="component" value="Chromosome 2L"/>
</dbReference>
<dbReference type="Bgee" id="431819">
    <property type="expression patterns" value="Expressed in zone of skin and 19 other cell types or tissues"/>
</dbReference>
<dbReference type="GO" id="GO:0016020">
    <property type="term" value="C:membrane"/>
    <property type="evidence" value="ECO:0007669"/>
    <property type="project" value="UniProtKB-SubCell"/>
</dbReference>
<dbReference type="GO" id="GO:0016740">
    <property type="term" value="F:transferase activity"/>
    <property type="evidence" value="ECO:0007669"/>
    <property type="project" value="UniProtKB-KW"/>
</dbReference>
<dbReference type="GO" id="GO:0008270">
    <property type="term" value="F:zinc ion binding"/>
    <property type="evidence" value="ECO:0007669"/>
    <property type="project" value="UniProtKB-KW"/>
</dbReference>
<dbReference type="GO" id="GO:0016567">
    <property type="term" value="P:protein ubiquitination"/>
    <property type="evidence" value="ECO:0007669"/>
    <property type="project" value="UniProtKB-UniPathway"/>
</dbReference>
<dbReference type="CDD" id="cd02122">
    <property type="entry name" value="PA_GRAIL_like"/>
    <property type="match status" value="1"/>
</dbReference>
<dbReference type="CDD" id="cd16804">
    <property type="entry name" value="RING-H2_RNF149"/>
    <property type="match status" value="1"/>
</dbReference>
<dbReference type="FunFam" id="3.50.30.30:FF:000003">
    <property type="entry name" value="E3 ubiquitin-protein ligase RNF128"/>
    <property type="match status" value="1"/>
</dbReference>
<dbReference type="FunFam" id="3.30.40.10:FF:000009">
    <property type="entry name" value="E3 ubiquitin-protein ligase RNF130"/>
    <property type="match status" value="1"/>
</dbReference>
<dbReference type="Gene3D" id="3.50.30.30">
    <property type="match status" value="1"/>
</dbReference>
<dbReference type="Gene3D" id="3.30.40.10">
    <property type="entry name" value="Zinc/RING finger domain, C3HC4 (zinc finger)"/>
    <property type="match status" value="1"/>
</dbReference>
<dbReference type="InterPro" id="IPR046450">
    <property type="entry name" value="PA_dom_sf"/>
</dbReference>
<dbReference type="InterPro" id="IPR003137">
    <property type="entry name" value="PA_domain"/>
</dbReference>
<dbReference type="InterPro" id="IPR042712">
    <property type="entry name" value="RNF149_RING-H2"/>
</dbReference>
<dbReference type="InterPro" id="IPR001841">
    <property type="entry name" value="Znf_RING"/>
</dbReference>
<dbReference type="InterPro" id="IPR013083">
    <property type="entry name" value="Znf_RING/FYVE/PHD"/>
</dbReference>
<dbReference type="PANTHER" id="PTHR46539">
    <property type="entry name" value="E3 UBIQUITIN-PROTEIN LIGASE ATL42"/>
    <property type="match status" value="1"/>
</dbReference>
<dbReference type="PANTHER" id="PTHR46539:SF26">
    <property type="entry name" value="E3 UBIQUITIN-PROTEIN LIGASE RNF149"/>
    <property type="match status" value="1"/>
</dbReference>
<dbReference type="Pfam" id="PF02225">
    <property type="entry name" value="PA"/>
    <property type="match status" value="1"/>
</dbReference>
<dbReference type="Pfam" id="PF13639">
    <property type="entry name" value="zf-RING_2"/>
    <property type="match status" value="1"/>
</dbReference>
<dbReference type="SMART" id="SM00184">
    <property type="entry name" value="RING"/>
    <property type="match status" value="1"/>
</dbReference>
<dbReference type="SUPFAM" id="SSF52025">
    <property type="entry name" value="PA domain"/>
    <property type="match status" value="1"/>
</dbReference>
<dbReference type="SUPFAM" id="SSF57850">
    <property type="entry name" value="RING/U-box"/>
    <property type="match status" value="1"/>
</dbReference>
<dbReference type="PROSITE" id="PS50089">
    <property type="entry name" value="ZF_RING_2"/>
    <property type="match status" value="1"/>
</dbReference>
<evidence type="ECO:0000250" key="1"/>
<evidence type="ECO:0000255" key="2"/>
<evidence type="ECO:0000255" key="3">
    <source>
        <dbReference type="PROSITE-ProRule" id="PRU00175"/>
    </source>
</evidence>
<evidence type="ECO:0000256" key="4">
    <source>
        <dbReference type="SAM" id="MobiDB-lite"/>
    </source>
</evidence>
<evidence type="ECO:0000305" key="5"/>
<keyword id="KW-0325">Glycoprotein</keyword>
<keyword id="KW-0472">Membrane</keyword>
<keyword id="KW-0479">Metal-binding</keyword>
<keyword id="KW-1185">Reference proteome</keyword>
<keyword id="KW-0732">Signal</keyword>
<keyword id="KW-0808">Transferase</keyword>
<keyword id="KW-0812">Transmembrane</keyword>
<keyword id="KW-1133">Transmembrane helix</keyword>
<keyword id="KW-0833">Ubl conjugation pathway</keyword>
<keyword id="KW-0862">Zinc</keyword>
<keyword id="KW-0863">Zinc-finger</keyword>
<protein>
    <recommendedName>
        <fullName>E3 ubiquitin-protein ligase RNF149</fullName>
        <ecNumber>2.3.2.27</ecNumber>
    </recommendedName>
    <alternativeName>
        <fullName>RING finger protein 149</fullName>
    </alternativeName>
    <alternativeName>
        <fullName evidence="5">RING-type E3 ubiquitin transferase RNF149</fullName>
    </alternativeName>
</protein>
<accession>Q6NRX0</accession>
<gene>
    <name type="primary">rnf149</name>
</gene>
<feature type="signal peptide" evidence="2">
    <location>
        <begin position="1"/>
        <end position="20"/>
    </location>
</feature>
<feature type="chain" id="PRO_0000261613" description="E3 ubiquitin-protein ligase RNF149">
    <location>
        <begin position="21"/>
        <end position="397"/>
    </location>
</feature>
<feature type="transmembrane region" description="Helical" evidence="2">
    <location>
        <begin position="196"/>
        <end position="216"/>
    </location>
</feature>
<feature type="domain" description="PA">
    <location>
        <begin position="83"/>
        <end position="170"/>
    </location>
</feature>
<feature type="zinc finger region" description="RING-type; atypical" evidence="3">
    <location>
        <begin position="264"/>
        <end position="305"/>
    </location>
</feature>
<feature type="region of interest" description="Disordered" evidence="4">
    <location>
        <begin position="39"/>
        <end position="60"/>
    </location>
</feature>
<feature type="region of interest" description="Disordered" evidence="4">
    <location>
        <begin position="341"/>
        <end position="397"/>
    </location>
</feature>
<feature type="compositionally biased region" description="Polar residues" evidence="4">
    <location>
        <begin position="39"/>
        <end position="49"/>
    </location>
</feature>
<feature type="compositionally biased region" description="Low complexity" evidence="4">
    <location>
        <begin position="351"/>
        <end position="368"/>
    </location>
</feature>
<feature type="compositionally biased region" description="Polar residues" evidence="4">
    <location>
        <begin position="388"/>
        <end position="397"/>
    </location>
</feature>
<feature type="glycosylation site" description="N-linked (GlcNAc...) asparagine" evidence="2">
    <location>
        <position position="40"/>
    </location>
</feature>
<feature type="glycosylation site" description="N-linked (GlcNAc...) asparagine" evidence="2">
    <location>
        <position position="140"/>
    </location>
</feature>
<feature type="glycosylation site" description="N-linked (GlcNAc...) asparagine" evidence="2">
    <location>
        <position position="231"/>
    </location>
</feature>
<name>RN149_XENLA</name>
<comment type="function">
    <text evidence="1">E3 ubiquitin-protein ligase. Ubiquitinates BRAF, inducing its proteasomal degradation.</text>
</comment>
<comment type="catalytic activity">
    <reaction>
        <text>S-ubiquitinyl-[E2 ubiquitin-conjugating enzyme]-L-cysteine + [acceptor protein]-L-lysine = [E2 ubiquitin-conjugating enzyme]-L-cysteine + N(6)-ubiquitinyl-[acceptor protein]-L-lysine.</text>
        <dbReference type="EC" id="2.3.2.27"/>
    </reaction>
</comment>
<comment type="pathway">
    <text>Protein modification; protein ubiquitination.</text>
</comment>
<comment type="subcellular location">
    <subcellularLocation>
        <location evidence="5">Membrane</location>
        <topology evidence="5">Single-pass membrane protein</topology>
    </subcellularLocation>
</comment>
<comment type="domain">
    <text evidence="1">The RING-type zinc finger domain mediates binding to an E2 ubiquitin-conjugating enzyme.</text>
</comment>
<proteinExistence type="evidence at transcript level"/>